<gene>
    <name type="primary">RPT2</name>
    <name type="ordered locus">ECU07_1640</name>
</gene>
<protein>
    <recommendedName>
        <fullName>26S proteasome regulatory subunit 4 homolog</fullName>
    </recommendedName>
</protein>
<proteinExistence type="evidence at protein level"/>
<keyword id="KW-0067">ATP-binding</keyword>
<keyword id="KW-0963">Cytoplasm</keyword>
<keyword id="KW-0547">Nucleotide-binding</keyword>
<keyword id="KW-0539">Nucleus</keyword>
<keyword id="KW-0647">Proteasome</keyword>
<keyword id="KW-1185">Reference proteome</keyword>
<sequence>MSRDKSERDNLQDTTTINLRRRRRVKEGKAASKPPQVYPLMKCKLRYLKLKKLAHLLSLEDNILSLCEPDKSSEGSNSQKHVVEQLRGSPLSVGTLEEFVDDHHGIITTGVGLEYYVNIMSFVDKDLLEPGCTVLLNYKDNSVVGVLEGEMDPMVNVMKLEKAPSETYADIGGLEEQIQEIKESVELPLTNPELYQEMGIKPPKGVILYGLPGTGKTLLAKAVANQTSATFLRVVGTELIQEYLGEGPKLVRELFRVADMHAPSIIFIDEIDAIGGKRYNTSSGGRREVQRTMLELLNQLDGFDTRNDIKVIMATNKIEALDPALIRPGRIDRKIEFGMPDAATKKKIFDIHTSRMTLDESVNIELLITSKEDLSGADIKAICTEAGMIALRERRKTVTMKDFISAREKVFFSKQKMVSAGLYS</sequence>
<feature type="chain" id="PRO_0000382904" description="26S proteasome regulatory subunit 4 homolog">
    <location>
        <begin position="1"/>
        <end position="424"/>
    </location>
</feature>
<feature type="region of interest" description="Disordered" evidence="3">
    <location>
        <begin position="1"/>
        <end position="33"/>
    </location>
</feature>
<feature type="compositionally biased region" description="Basic and acidic residues" evidence="3">
    <location>
        <begin position="1"/>
        <end position="11"/>
    </location>
</feature>
<feature type="binding site" evidence="2">
    <location>
        <begin position="210"/>
        <end position="217"/>
    </location>
    <ligand>
        <name>ATP</name>
        <dbReference type="ChEBI" id="CHEBI:30616"/>
    </ligand>
</feature>
<evidence type="ECO:0000250" key="1"/>
<evidence type="ECO:0000255" key="2"/>
<evidence type="ECO:0000256" key="3">
    <source>
        <dbReference type="SAM" id="MobiDB-lite"/>
    </source>
</evidence>
<evidence type="ECO:0000269" key="4">
    <source>
    </source>
</evidence>
<evidence type="ECO:0000305" key="5"/>
<comment type="function">
    <text evidence="1">Acts as a regulatory subunit of the 26S proteasome which degrades poly-ubiquitinated proteins in the cytoplasm and in the nucleus. It is essential for the regulated turnover of proteins and for the removal of misfolded proteins. The proteasome is a multicatalytic proteinase complex that is characterized by its ability to cleave peptides with Arg, Phe, Tyr, Leu, and Glu adjacent to the leaving group at neutral or slightly basic pH (By similarity).</text>
</comment>
<comment type="subunit">
    <text evidence="1">The 26S proteasome consists of a 20S proteasome core and two 19S regulatory subunits. The 20S proteasome core is composed of 28 subunits that are arranged in four stacked rings, resulting in a barrel-shaped structure. The two end rings are each formed by seven alpha subunits, and the two central rings are each formed by seven beta subunits. The catalytic chamber with the active sites is on the inside of the barrel (By similarity).</text>
</comment>
<comment type="subcellular location">
    <subcellularLocation>
        <location evidence="1">Cytoplasm</location>
    </subcellularLocation>
    <subcellularLocation>
        <location evidence="1">Nucleus</location>
    </subcellularLocation>
</comment>
<comment type="developmental stage">
    <text evidence="4">Expressed in late sporogonial stages.</text>
</comment>
<comment type="similarity">
    <text evidence="5">Belongs to the AAA ATPase family.</text>
</comment>
<reference key="1">
    <citation type="journal article" date="2001" name="Nature">
        <title>Genome sequence and gene compaction of the eukaryote parasite Encephalitozoon cuniculi.</title>
        <authorList>
            <person name="Katinka M.D."/>
            <person name="Duprat S."/>
            <person name="Cornillot E."/>
            <person name="Metenier G."/>
            <person name="Thomarat F."/>
            <person name="Prensier G."/>
            <person name="Barbe V."/>
            <person name="Peyretaillade E."/>
            <person name="Brottier P."/>
            <person name="Wincker P."/>
            <person name="Delbac F."/>
            <person name="El Alaoui H."/>
            <person name="Peyret P."/>
            <person name="Saurin W."/>
            <person name="Gouy M."/>
            <person name="Weissenbach J."/>
            <person name="Vivares C.P."/>
        </authorList>
    </citation>
    <scope>NUCLEOTIDE SEQUENCE [LARGE SCALE GENOMIC DNA]</scope>
    <source>
        <strain>GB-M1</strain>
    </source>
</reference>
<reference key="2">
    <citation type="journal article" date="2006" name="Proteomics">
        <title>Proteomic analysis of the eukaryotic parasite Encephalitozoon cuniculi (microsporidia): a reference map for proteins expressed in late sporogonial stages.</title>
        <authorList>
            <person name="Brosson D."/>
            <person name="Kuhn L."/>
            <person name="Delbac F."/>
            <person name="Garin J."/>
            <person name="Vivares C.P."/>
            <person name="Texier C."/>
        </authorList>
    </citation>
    <scope>IDENTIFICATION BY MASS SPECTROMETRY [LARGE SCALE ANALYSIS]</scope>
    <scope>DEVELOPMENTAL STAGE</scope>
</reference>
<name>PRS4_ENCCU</name>
<organism>
    <name type="scientific">Encephalitozoon cuniculi (strain GB-M1)</name>
    <name type="common">Microsporidian parasite</name>
    <dbReference type="NCBI Taxonomy" id="284813"/>
    <lineage>
        <taxon>Eukaryota</taxon>
        <taxon>Fungi</taxon>
        <taxon>Fungi incertae sedis</taxon>
        <taxon>Microsporidia</taxon>
        <taxon>Unikaryonidae</taxon>
        <taxon>Encephalitozoon</taxon>
    </lineage>
</organism>
<dbReference type="EMBL" id="AL590447">
    <property type="protein sequence ID" value="CAD25695.1"/>
    <property type="molecule type" value="Genomic_DNA"/>
</dbReference>
<dbReference type="RefSeq" id="NP_586091.1">
    <property type="nucleotide sequence ID" value="NM_001041713.1"/>
</dbReference>
<dbReference type="SMR" id="Q8SRH0"/>
<dbReference type="FunCoup" id="Q8SRH0">
    <property type="interactions" value="186"/>
</dbReference>
<dbReference type="STRING" id="284813.Q8SRH0"/>
<dbReference type="GeneID" id="859525"/>
<dbReference type="KEGG" id="ecu:ECU07_1640"/>
<dbReference type="VEuPathDB" id="MicrosporidiaDB:ECU07_1640"/>
<dbReference type="HOGENOM" id="CLU_000688_2_3_1"/>
<dbReference type="InParanoid" id="Q8SRH0"/>
<dbReference type="OMA" id="QDDTDPM"/>
<dbReference type="OrthoDB" id="10255768at2759"/>
<dbReference type="Proteomes" id="UP000000819">
    <property type="component" value="Chromosome VII"/>
</dbReference>
<dbReference type="GO" id="GO:0005737">
    <property type="term" value="C:cytoplasm"/>
    <property type="evidence" value="ECO:0007669"/>
    <property type="project" value="UniProtKB-SubCell"/>
</dbReference>
<dbReference type="GO" id="GO:0005634">
    <property type="term" value="C:nucleus"/>
    <property type="evidence" value="ECO:0007669"/>
    <property type="project" value="UniProtKB-SubCell"/>
</dbReference>
<dbReference type="GO" id="GO:0008540">
    <property type="term" value="C:proteasome regulatory particle, base subcomplex"/>
    <property type="evidence" value="ECO:0007669"/>
    <property type="project" value="UniProtKB-ARBA"/>
</dbReference>
<dbReference type="GO" id="GO:0005524">
    <property type="term" value="F:ATP binding"/>
    <property type="evidence" value="ECO:0007669"/>
    <property type="project" value="UniProtKB-KW"/>
</dbReference>
<dbReference type="GO" id="GO:0016887">
    <property type="term" value="F:ATP hydrolysis activity"/>
    <property type="evidence" value="ECO:0007669"/>
    <property type="project" value="InterPro"/>
</dbReference>
<dbReference type="CDD" id="cd19502">
    <property type="entry name" value="RecA-like_PAN_like"/>
    <property type="match status" value="1"/>
</dbReference>
<dbReference type="FunFam" id="2.40.50.140:FF:000030">
    <property type="entry name" value="26S protease regulatory subunit 4"/>
    <property type="match status" value="1"/>
</dbReference>
<dbReference type="FunFam" id="3.40.50.300:FF:000039">
    <property type="entry name" value="26S proteasome regulatory subunit 4"/>
    <property type="match status" value="1"/>
</dbReference>
<dbReference type="Gene3D" id="1.10.8.60">
    <property type="match status" value="1"/>
</dbReference>
<dbReference type="Gene3D" id="2.40.50.140">
    <property type="entry name" value="Nucleic acid-binding proteins"/>
    <property type="match status" value="1"/>
</dbReference>
<dbReference type="Gene3D" id="3.40.50.300">
    <property type="entry name" value="P-loop containing nucleotide triphosphate hydrolases"/>
    <property type="match status" value="1"/>
</dbReference>
<dbReference type="InterPro" id="IPR050221">
    <property type="entry name" value="26S_Proteasome_ATPase"/>
</dbReference>
<dbReference type="InterPro" id="IPR003593">
    <property type="entry name" value="AAA+_ATPase"/>
</dbReference>
<dbReference type="InterPro" id="IPR041569">
    <property type="entry name" value="AAA_lid_3"/>
</dbReference>
<dbReference type="InterPro" id="IPR003959">
    <property type="entry name" value="ATPase_AAA_core"/>
</dbReference>
<dbReference type="InterPro" id="IPR003960">
    <property type="entry name" value="ATPase_AAA_CS"/>
</dbReference>
<dbReference type="InterPro" id="IPR012340">
    <property type="entry name" value="NA-bd_OB-fold"/>
</dbReference>
<dbReference type="InterPro" id="IPR027417">
    <property type="entry name" value="P-loop_NTPase"/>
</dbReference>
<dbReference type="InterPro" id="IPR032501">
    <property type="entry name" value="Prot_ATP_ID_OB_2nd"/>
</dbReference>
<dbReference type="PANTHER" id="PTHR23073">
    <property type="entry name" value="26S PROTEASOME REGULATORY SUBUNIT"/>
    <property type="match status" value="1"/>
</dbReference>
<dbReference type="Pfam" id="PF00004">
    <property type="entry name" value="AAA"/>
    <property type="match status" value="1"/>
</dbReference>
<dbReference type="Pfam" id="PF17862">
    <property type="entry name" value="AAA_lid_3"/>
    <property type="match status" value="1"/>
</dbReference>
<dbReference type="Pfam" id="PF16450">
    <property type="entry name" value="Prot_ATP_ID_OB_C"/>
    <property type="match status" value="1"/>
</dbReference>
<dbReference type="SMART" id="SM00382">
    <property type="entry name" value="AAA"/>
    <property type="match status" value="1"/>
</dbReference>
<dbReference type="SUPFAM" id="SSF52540">
    <property type="entry name" value="P-loop containing nucleoside triphosphate hydrolases"/>
    <property type="match status" value="1"/>
</dbReference>
<dbReference type="PROSITE" id="PS00674">
    <property type="entry name" value="AAA"/>
    <property type="match status" value="1"/>
</dbReference>
<accession>Q8SRH0</accession>